<protein>
    <recommendedName>
        <fullName evidence="4">Basic helix-loop-helix protein 004</fullName>
        <shortName evidence="4">AtbHLH004</shortName>
        <shortName evidence="4">bHLH 004</shortName>
    </recommendedName>
    <alternativeName>
        <fullName evidence="4">bHLH transcription factor bHLH004</fullName>
    </alternativeName>
</protein>
<feature type="chain" id="PRO_0000452797" description="Basic helix-loop-helix protein 004">
    <location>
        <begin position="1"/>
        <end position="380"/>
    </location>
</feature>
<feature type="domain" description="bHLH" evidence="2">
    <location>
        <begin position="192"/>
        <end position="241"/>
    </location>
</feature>
<feature type="region of interest" description="Disordered" evidence="3">
    <location>
        <begin position="180"/>
        <end position="202"/>
    </location>
</feature>
<feature type="region of interest" description="Basic motif" evidence="2">
    <location>
        <begin position="192"/>
        <end position="205"/>
    </location>
</feature>
<feature type="region of interest" description="Helix-loop-helix motif" evidence="2">
    <location>
        <begin position="206"/>
        <end position="241"/>
    </location>
</feature>
<feature type="region of interest" description="Disordered" evidence="3">
    <location>
        <begin position="270"/>
        <end position="289"/>
    </location>
</feature>
<comment type="function">
    <text evidence="1">Probable transcription factor.</text>
</comment>
<comment type="subcellular location">
    <subcellularLocation>
        <location evidence="1 2">Nucleus</location>
    </subcellularLocation>
    <subcellularLocation>
        <location evidence="1">Cytoplasm</location>
    </subcellularLocation>
    <text evidence="1">Localizes mainly in the nucleus.</text>
</comment>
<comment type="similarity">
    <text evidence="4">Belongs to the bHLH protein family.</text>
</comment>
<comment type="sequence caution" evidence="4">
    <conflict type="erroneous gene model prediction">
        <sequence resource="EMBL-CDS" id="AAG13585"/>
    </conflict>
    <text>The predicted gene has been split into 2 genes.</text>
</comment>
<evidence type="ECO:0000250" key="1">
    <source>
        <dbReference type="UniProtKB" id="Q10S44"/>
    </source>
</evidence>
<evidence type="ECO:0000255" key="2">
    <source>
        <dbReference type="PROSITE-ProRule" id="PRU00981"/>
    </source>
</evidence>
<evidence type="ECO:0000256" key="3">
    <source>
        <dbReference type="SAM" id="MobiDB-lite"/>
    </source>
</evidence>
<evidence type="ECO:0000305" key="4"/>
<evidence type="ECO:0000312" key="5">
    <source>
        <dbReference type="EMBL" id="ABB47949.1"/>
    </source>
</evidence>
<evidence type="ECO:0000312" key="6">
    <source>
        <dbReference type="EMBL" id="BAF27114.1"/>
    </source>
</evidence>
<evidence type="ECO:0000312" key="7">
    <source>
        <dbReference type="EMBL" id="BAT11888.1"/>
    </source>
</evidence>
<evidence type="ECO:0000312" key="8">
    <source>
        <dbReference type="EMBL" id="EAZ16862.1"/>
    </source>
</evidence>
<sequence length="380" mass="40767">MELMDDDGSSSLLEELMAPLRRGTPTTTPEDLWLQAYPMMMSPMCGDGVMLGDLLVGGGNARNTLASPPPPSFPLPVPLTTTTPCPPLHEVSFEFDSIDCLGEVCNPYKRSGGAVRATAAAQVMVAAMDPRREAASSAVAVAAVEEEERCKARRGAGGGGDSGELAPMFVFGGGGGAAASVRPRSCRPPQPGAPSKNLMAERRRRKRLNDRLSMLRSVVPRISKMDRTSILGDTIGYVKELMDRIKNLQVEAATGDSSSSSTENLSMLKLNTLKPPPSSSSGEETPLIRNSTRFEVERRENGSTRIEMACAAIPELLPSTLAALEALGVEIEQCVISCFDDFAMQASCLQDDKKREMTRDTEEIKQTLFRSAGYGDGCLI</sequence>
<keyword id="KW-0963">Cytoplasm</keyword>
<keyword id="KW-0238">DNA-binding</keyword>
<keyword id="KW-0539">Nucleus</keyword>
<keyword id="KW-1185">Reference proteome</keyword>
<keyword id="KW-0804">Transcription</keyword>
<keyword id="KW-0805">Transcription regulation</keyword>
<reference key="1">
    <citation type="journal article" date="2003" name="Science">
        <title>In-depth view of structure, activity, and evolution of rice chromosome 10.</title>
        <authorList>
            <person name="Yu Y."/>
            <person name="Rambo T."/>
            <person name="Currie J."/>
            <person name="Saski C."/>
            <person name="Kim H.-R."/>
            <person name="Collura K."/>
            <person name="Thompson S."/>
            <person name="Simmons J."/>
            <person name="Yang T.-J."/>
            <person name="Nah G."/>
            <person name="Patel A.J."/>
            <person name="Thurmond S."/>
            <person name="Henry D."/>
            <person name="Oates R."/>
            <person name="Palmer M."/>
            <person name="Pries G."/>
            <person name="Gibson J."/>
            <person name="Anderson H."/>
            <person name="Paradkar M."/>
            <person name="Crane L."/>
            <person name="Dale J."/>
            <person name="Carver M.B."/>
            <person name="Wood T."/>
            <person name="Frisch D."/>
            <person name="Engler F."/>
            <person name="Soderlund C."/>
            <person name="Palmer L.E."/>
            <person name="Teytelman L."/>
            <person name="Nascimento L."/>
            <person name="De la Bastide M."/>
            <person name="Spiegel L."/>
            <person name="Ware D."/>
            <person name="O'Shaughnessy A."/>
            <person name="Dike S."/>
            <person name="Dedhia N."/>
            <person name="Preston R."/>
            <person name="Huang E."/>
            <person name="Ferraro K."/>
            <person name="Kuit K."/>
            <person name="Miller B."/>
            <person name="Zutavern T."/>
            <person name="Katzenberger F."/>
            <person name="Muller S."/>
            <person name="Balija V."/>
            <person name="Martienssen R.A."/>
            <person name="Stein L."/>
            <person name="Minx P."/>
            <person name="Johnson D."/>
            <person name="Cordum H."/>
            <person name="Mardis E."/>
            <person name="Cheng Z."/>
            <person name="Jiang J."/>
            <person name="Wilson R."/>
            <person name="McCombie W.R."/>
            <person name="Wing R.A."/>
            <person name="Yuan Q."/>
            <person name="Ouyang S."/>
            <person name="Liu J."/>
            <person name="Jones K.M."/>
            <person name="Gansberger K."/>
            <person name="Moffat K."/>
            <person name="Hill J."/>
            <person name="Tsitrin T."/>
            <person name="Overton L."/>
            <person name="Bera J."/>
            <person name="Kim M."/>
            <person name="Jin S."/>
            <person name="Tallon L."/>
            <person name="Ciecko A."/>
            <person name="Pai G."/>
            <person name="Van Aken S."/>
            <person name="Utterback T."/>
            <person name="Reidmuller S."/>
            <person name="Bormann J."/>
            <person name="Feldblyum T."/>
            <person name="Hsiao J."/>
            <person name="Zismann V."/>
            <person name="Blunt S."/>
            <person name="de Vazeille A.R."/>
            <person name="Shaffer T."/>
            <person name="Koo H."/>
            <person name="Suh B."/>
            <person name="Yang Q."/>
            <person name="Haas B."/>
            <person name="Peterson J."/>
            <person name="Pertea M."/>
            <person name="Volfovsky N."/>
            <person name="Wortman J."/>
            <person name="White O."/>
            <person name="Salzberg S.L."/>
            <person name="Fraser C.M."/>
            <person name="Buell C.R."/>
            <person name="Messing J."/>
            <person name="Song R."/>
            <person name="Fuks G."/>
            <person name="Llaca V."/>
            <person name="Kovchak S."/>
            <person name="Young S."/>
            <person name="Bowers J.E."/>
            <person name="Paterson A.H."/>
            <person name="Johns M.A."/>
            <person name="Mao L."/>
            <person name="Pan H."/>
            <person name="Dean R.A."/>
        </authorList>
    </citation>
    <scope>NUCLEOTIDE SEQUENCE [LARGE SCALE GENOMIC DNA]</scope>
    <source>
        <strain>cv. Nipponbare</strain>
    </source>
</reference>
<reference key="2">
    <citation type="journal article" date="2005" name="Nature">
        <title>The map-based sequence of the rice genome.</title>
        <authorList>
            <consortium name="International rice genome sequencing project (IRGSP)"/>
        </authorList>
    </citation>
    <scope>NUCLEOTIDE SEQUENCE [LARGE SCALE GENOMIC DNA]</scope>
    <source>
        <strain>cv. Nipponbare</strain>
    </source>
</reference>
<reference key="3">
    <citation type="journal article" date="2008" name="Nucleic Acids Res.">
        <title>The rice annotation project database (RAP-DB): 2008 update.</title>
        <authorList>
            <consortium name="The rice annotation project (RAP)"/>
        </authorList>
    </citation>
    <scope>GENOME REANNOTATION</scope>
    <source>
        <strain>cv. Nipponbare</strain>
    </source>
</reference>
<reference key="4">
    <citation type="journal article" date="2013" name="Rice">
        <title>Improvement of the Oryza sativa Nipponbare reference genome using next generation sequence and optical map data.</title>
        <authorList>
            <person name="Kawahara Y."/>
            <person name="de la Bastide M."/>
            <person name="Hamilton J.P."/>
            <person name="Kanamori H."/>
            <person name="McCombie W.R."/>
            <person name="Ouyang S."/>
            <person name="Schwartz D.C."/>
            <person name="Tanaka T."/>
            <person name="Wu J."/>
            <person name="Zhou S."/>
            <person name="Childs K.L."/>
            <person name="Davidson R.M."/>
            <person name="Lin H."/>
            <person name="Quesada-Ocampo L."/>
            <person name="Vaillancourt B."/>
            <person name="Sakai H."/>
            <person name="Lee S.S."/>
            <person name="Kim J."/>
            <person name="Numa H."/>
            <person name="Itoh T."/>
            <person name="Buell C.R."/>
            <person name="Matsumoto T."/>
        </authorList>
    </citation>
    <scope>GENOME REANNOTATION</scope>
    <source>
        <strain>cv. Nipponbare</strain>
    </source>
</reference>
<reference key="5">
    <citation type="journal article" date="2005" name="PLoS Biol.">
        <title>The genomes of Oryza sativa: a history of duplications.</title>
        <authorList>
            <person name="Yu J."/>
            <person name="Wang J."/>
            <person name="Lin W."/>
            <person name="Li S."/>
            <person name="Li H."/>
            <person name="Zhou J."/>
            <person name="Ni P."/>
            <person name="Dong W."/>
            <person name="Hu S."/>
            <person name="Zeng C."/>
            <person name="Zhang J."/>
            <person name="Zhang Y."/>
            <person name="Li R."/>
            <person name="Xu Z."/>
            <person name="Li S."/>
            <person name="Li X."/>
            <person name="Zheng H."/>
            <person name="Cong L."/>
            <person name="Lin L."/>
            <person name="Yin J."/>
            <person name="Geng J."/>
            <person name="Li G."/>
            <person name="Shi J."/>
            <person name="Liu J."/>
            <person name="Lv H."/>
            <person name="Li J."/>
            <person name="Wang J."/>
            <person name="Deng Y."/>
            <person name="Ran L."/>
            <person name="Shi X."/>
            <person name="Wang X."/>
            <person name="Wu Q."/>
            <person name="Li C."/>
            <person name="Ren X."/>
            <person name="Wang J."/>
            <person name="Wang X."/>
            <person name="Li D."/>
            <person name="Liu D."/>
            <person name="Zhang X."/>
            <person name="Ji Z."/>
            <person name="Zhao W."/>
            <person name="Sun Y."/>
            <person name="Zhang Z."/>
            <person name="Bao J."/>
            <person name="Han Y."/>
            <person name="Dong L."/>
            <person name="Ji J."/>
            <person name="Chen P."/>
            <person name="Wu S."/>
            <person name="Liu J."/>
            <person name="Xiao Y."/>
            <person name="Bu D."/>
            <person name="Tan J."/>
            <person name="Yang L."/>
            <person name="Ye C."/>
            <person name="Zhang J."/>
            <person name="Xu J."/>
            <person name="Zhou Y."/>
            <person name="Yu Y."/>
            <person name="Zhang B."/>
            <person name="Zhuang S."/>
            <person name="Wei H."/>
            <person name="Liu B."/>
            <person name="Lei M."/>
            <person name="Yu H."/>
            <person name="Li Y."/>
            <person name="Xu H."/>
            <person name="Wei S."/>
            <person name="He X."/>
            <person name="Fang L."/>
            <person name="Zhang Z."/>
            <person name="Zhang Y."/>
            <person name="Huang X."/>
            <person name="Su Z."/>
            <person name="Tong W."/>
            <person name="Li J."/>
            <person name="Tong Z."/>
            <person name="Li S."/>
            <person name="Ye J."/>
            <person name="Wang L."/>
            <person name="Fang L."/>
            <person name="Lei T."/>
            <person name="Chen C.-S."/>
            <person name="Chen H.-C."/>
            <person name="Xu Z."/>
            <person name="Li H."/>
            <person name="Huang H."/>
            <person name="Zhang F."/>
            <person name="Xu H."/>
            <person name="Li N."/>
            <person name="Zhao C."/>
            <person name="Li S."/>
            <person name="Dong L."/>
            <person name="Huang Y."/>
            <person name="Li L."/>
            <person name="Xi Y."/>
            <person name="Qi Q."/>
            <person name="Li W."/>
            <person name="Zhang B."/>
            <person name="Hu W."/>
            <person name="Zhang Y."/>
            <person name="Tian X."/>
            <person name="Jiao Y."/>
            <person name="Liang X."/>
            <person name="Jin J."/>
            <person name="Gao L."/>
            <person name="Zheng W."/>
            <person name="Hao B."/>
            <person name="Liu S.-M."/>
            <person name="Wang W."/>
            <person name="Yuan L."/>
            <person name="Cao M."/>
            <person name="McDermott J."/>
            <person name="Samudrala R."/>
            <person name="Wang J."/>
            <person name="Wong G.K.-S."/>
            <person name="Yang H."/>
        </authorList>
    </citation>
    <scope>NUCLEOTIDE SEQUENCE [LARGE SCALE GENOMIC DNA]</scope>
    <source>
        <strain>cv. Nipponbare</strain>
    </source>
</reference>
<reference key="6">
    <citation type="journal article" date="2003" name="Science">
        <title>Collection, mapping, and annotation of over 28,000 cDNA clones from japonica rice.</title>
        <authorList>
            <consortium name="The rice full-length cDNA consortium"/>
        </authorList>
    </citation>
    <scope>NUCLEOTIDE SEQUENCE [LARGE SCALE MRNA]</scope>
    <source>
        <strain>cv. Nipponbare</strain>
    </source>
</reference>
<organism>
    <name type="scientific">Oryza sativa subsp. japonica</name>
    <name type="common">Rice</name>
    <dbReference type="NCBI Taxonomy" id="39947"/>
    <lineage>
        <taxon>Eukaryota</taxon>
        <taxon>Viridiplantae</taxon>
        <taxon>Streptophyta</taxon>
        <taxon>Embryophyta</taxon>
        <taxon>Tracheophyta</taxon>
        <taxon>Spermatophyta</taxon>
        <taxon>Magnoliopsida</taxon>
        <taxon>Liliopsida</taxon>
        <taxon>Poales</taxon>
        <taxon>Poaceae</taxon>
        <taxon>BOP clade</taxon>
        <taxon>Oryzoideae</taxon>
        <taxon>Oryzeae</taxon>
        <taxon>Oryzinae</taxon>
        <taxon>Oryza</taxon>
        <taxon>Oryza sativa</taxon>
    </lineage>
</organism>
<proteinExistence type="evidence at transcript level"/>
<accession>Q336V8</accession>
<accession>Q0IW01</accession>
<accession>Q9FWE1</accession>
<dbReference type="EMBL" id="AC051633">
    <property type="protein sequence ID" value="AAG13585.1"/>
    <property type="status" value="ALT_SEQ"/>
    <property type="molecule type" value="Genomic_DNA"/>
</dbReference>
<dbReference type="EMBL" id="DP000086">
    <property type="protein sequence ID" value="ABB47949.1"/>
    <property type="molecule type" value="Genomic_DNA"/>
</dbReference>
<dbReference type="EMBL" id="AP008216">
    <property type="protein sequence ID" value="BAF27114.1"/>
    <property type="molecule type" value="Genomic_DNA"/>
</dbReference>
<dbReference type="EMBL" id="AP014966">
    <property type="protein sequence ID" value="BAT11888.1"/>
    <property type="molecule type" value="Genomic_DNA"/>
</dbReference>
<dbReference type="EMBL" id="CM000147">
    <property type="protein sequence ID" value="EAZ16862.1"/>
    <property type="molecule type" value="Genomic_DNA"/>
</dbReference>
<dbReference type="EMBL" id="AK063669">
    <property type="protein sequence ID" value="BAG88813.1"/>
    <property type="molecule type" value="mRNA"/>
</dbReference>
<dbReference type="SMR" id="Q336V8"/>
<dbReference type="FunCoup" id="Q336V8">
    <property type="interactions" value="39"/>
</dbReference>
<dbReference type="PaxDb" id="39947-Q336V8"/>
<dbReference type="EnsemblPlants" id="Os10t0544200-01">
    <property type="protein sequence ID" value="Os10t0544200-01"/>
    <property type="gene ID" value="Os10g0544200"/>
</dbReference>
<dbReference type="Gramene" id="Os10t0544200-01">
    <property type="protein sequence ID" value="Os10t0544200-01"/>
    <property type="gene ID" value="Os10g0544200"/>
</dbReference>
<dbReference type="KEGG" id="dosa:Os10g0544200"/>
<dbReference type="eggNOG" id="ENOG502QQHH">
    <property type="taxonomic scope" value="Eukaryota"/>
</dbReference>
<dbReference type="HOGENOM" id="CLU_035660_1_2_1"/>
<dbReference type="InParanoid" id="Q336V8"/>
<dbReference type="OMA" id="CLQDDKK"/>
<dbReference type="Proteomes" id="UP000000763">
    <property type="component" value="Chromosome 10"/>
</dbReference>
<dbReference type="Proteomes" id="UP000007752">
    <property type="component" value="Chromosome 10"/>
</dbReference>
<dbReference type="Proteomes" id="UP000059680">
    <property type="component" value="Chromosome 10"/>
</dbReference>
<dbReference type="GO" id="GO:0005737">
    <property type="term" value="C:cytoplasm"/>
    <property type="evidence" value="ECO:0007669"/>
    <property type="project" value="UniProtKB-SubCell"/>
</dbReference>
<dbReference type="GO" id="GO:0005634">
    <property type="term" value="C:nucleus"/>
    <property type="evidence" value="ECO:0000318"/>
    <property type="project" value="GO_Central"/>
</dbReference>
<dbReference type="GO" id="GO:0003700">
    <property type="term" value="F:DNA-binding transcription factor activity"/>
    <property type="evidence" value="ECO:0000318"/>
    <property type="project" value="GO_Central"/>
</dbReference>
<dbReference type="GO" id="GO:0046983">
    <property type="term" value="F:protein dimerization activity"/>
    <property type="evidence" value="ECO:0007669"/>
    <property type="project" value="InterPro"/>
</dbReference>
<dbReference type="GO" id="GO:0043565">
    <property type="term" value="F:sequence-specific DNA binding"/>
    <property type="evidence" value="ECO:0000318"/>
    <property type="project" value="GO_Central"/>
</dbReference>
<dbReference type="GO" id="GO:0006355">
    <property type="term" value="P:regulation of DNA-templated transcription"/>
    <property type="evidence" value="ECO:0000318"/>
    <property type="project" value="GO_Central"/>
</dbReference>
<dbReference type="Gene3D" id="4.10.280.10">
    <property type="entry name" value="Helix-loop-helix DNA-binding domain"/>
    <property type="match status" value="1"/>
</dbReference>
<dbReference type="InterPro" id="IPR011598">
    <property type="entry name" value="bHLH_dom"/>
</dbReference>
<dbReference type="InterPro" id="IPR036638">
    <property type="entry name" value="HLH_DNA-bd_sf"/>
</dbReference>
<dbReference type="InterPro" id="IPR051358">
    <property type="entry name" value="TF_AMS/ICE1/BHLH6-like"/>
</dbReference>
<dbReference type="PANTHER" id="PTHR31945:SF61">
    <property type="entry name" value="TRANSCRIPTION FACTOR BHLH3"/>
    <property type="match status" value="1"/>
</dbReference>
<dbReference type="PANTHER" id="PTHR31945">
    <property type="entry name" value="TRANSCRIPTION FACTOR SCREAM2-RELATED"/>
    <property type="match status" value="1"/>
</dbReference>
<dbReference type="Pfam" id="PF00010">
    <property type="entry name" value="HLH"/>
    <property type="match status" value="1"/>
</dbReference>
<dbReference type="SMART" id="SM00353">
    <property type="entry name" value="HLH"/>
    <property type="match status" value="1"/>
</dbReference>
<dbReference type="SUPFAM" id="SSF47459">
    <property type="entry name" value="HLH, helix-loop-helix DNA-binding domain"/>
    <property type="match status" value="1"/>
</dbReference>
<dbReference type="PROSITE" id="PS50888">
    <property type="entry name" value="BHLH"/>
    <property type="match status" value="1"/>
</dbReference>
<name>BH004_ORYSJ</name>
<gene>
    <name evidence="4" type="primary">BHLH004</name>
    <name evidence="5" type="ordered locus">LOC_Os10g39750</name>
    <name evidence="6 7" type="ordered locus">Os10g0544200</name>
    <name evidence="8" type="ORF">OsJ_32337</name>
    <name evidence="7" type="ORF">OSNPB_100544200</name>
</gene>